<reference key="1">
    <citation type="journal article" date="2008" name="Proc. Natl. Acad. Sci. U.S.A.">
        <title>The genome sequence of Bifidobacterium longum subsp. infantis reveals adaptations for milk utilization within the infant microbiome.</title>
        <authorList>
            <person name="Sela D.A."/>
            <person name="Chapman J."/>
            <person name="Adeuya A."/>
            <person name="Kim J.H."/>
            <person name="Chen F."/>
            <person name="Whitehead T.R."/>
            <person name="Lapidus A."/>
            <person name="Rokhsar D.S."/>
            <person name="Lebrilla C.B."/>
            <person name="German J.B."/>
            <person name="Price N.P."/>
            <person name="Richardson P.M."/>
            <person name="Mills D.A."/>
        </authorList>
    </citation>
    <scope>NUCLEOTIDE SEQUENCE [LARGE SCALE GENOMIC DNA]</scope>
    <source>
        <strain>ATCC 15697 / DSM 20088 / JCM 1222 / NCTC 11817 / S12</strain>
    </source>
</reference>
<reference key="2">
    <citation type="journal article" date="2011" name="Nature">
        <title>Bifidobacteria can protect from enteropathogenic infection through production of acetate.</title>
        <authorList>
            <person name="Fukuda S."/>
            <person name="Toh H."/>
            <person name="Hase K."/>
            <person name="Oshima K."/>
            <person name="Nakanishi Y."/>
            <person name="Yoshimura K."/>
            <person name="Tobe T."/>
            <person name="Clarke J.M."/>
            <person name="Topping D.L."/>
            <person name="Suzuki T."/>
            <person name="Taylor T.D."/>
            <person name="Itoh K."/>
            <person name="Kikuchi J."/>
            <person name="Morita H."/>
            <person name="Hattori M."/>
            <person name="Ohno H."/>
        </authorList>
    </citation>
    <scope>NUCLEOTIDE SEQUENCE [LARGE SCALE GENOMIC DNA]</scope>
    <source>
        <strain>ATCC 15697 / DSM 20088 / JCM 1222 / NCTC 11817 / S12</strain>
    </source>
</reference>
<gene>
    <name evidence="1" type="primary">dut</name>
    <name type="ordered locus">Blon_0970</name>
    <name type="ordered locus">BLIJ_0987</name>
</gene>
<protein>
    <recommendedName>
        <fullName evidence="1">Deoxyuridine 5'-triphosphate nucleotidohydrolase</fullName>
        <shortName evidence="1">dUTPase</shortName>
        <ecNumber evidence="1">3.6.1.23</ecNumber>
    </recommendedName>
    <alternativeName>
        <fullName evidence="1">dUTP pyrophosphatase</fullName>
    </alternativeName>
</protein>
<name>DUT_BIFLS</name>
<organism>
    <name type="scientific">Bifidobacterium longum subsp. infantis (strain ATCC 15697 / DSM 20088 / JCM 1222 / NCTC 11817 / S12)</name>
    <dbReference type="NCBI Taxonomy" id="391904"/>
    <lineage>
        <taxon>Bacteria</taxon>
        <taxon>Bacillati</taxon>
        <taxon>Actinomycetota</taxon>
        <taxon>Actinomycetes</taxon>
        <taxon>Bifidobacteriales</taxon>
        <taxon>Bifidobacteriaceae</taxon>
        <taxon>Bifidobacterium</taxon>
    </lineage>
</organism>
<dbReference type="EC" id="3.6.1.23" evidence="1"/>
<dbReference type="EMBL" id="CP001095">
    <property type="protein sequence ID" value="ACJ52069.1"/>
    <property type="molecule type" value="Genomic_DNA"/>
</dbReference>
<dbReference type="EMBL" id="AP010889">
    <property type="protein sequence ID" value="BAJ68577.1"/>
    <property type="molecule type" value="Genomic_DNA"/>
</dbReference>
<dbReference type="RefSeq" id="WP_012577334.1">
    <property type="nucleotide sequence ID" value="NZ_JDTT01000060.1"/>
</dbReference>
<dbReference type="SMR" id="B7GQI9"/>
<dbReference type="KEGG" id="bln:Blon_0970"/>
<dbReference type="KEGG" id="blon:BLIJ_0987"/>
<dbReference type="PATRIC" id="fig|391904.8.peg.997"/>
<dbReference type="HOGENOM" id="CLU_068508_1_3_11"/>
<dbReference type="UniPathway" id="UPA00610">
    <property type="reaction ID" value="UER00666"/>
</dbReference>
<dbReference type="Proteomes" id="UP000001360">
    <property type="component" value="Chromosome"/>
</dbReference>
<dbReference type="GO" id="GO:0004170">
    <property type="term" value="F:dUTP diphosphatase activity"/>
    <property type="evidence" value="ECO:0007669"/>
    <property type="project" value="UniProtKB-UniRule"/>
</dbReference>
<dbReference type="GO" id="GO:0000287">
    <property type="term" value="F:magnesium ion binding"/>
    <property type="evidence" value="ECO:0007669"/>
    <property type="project" value="UniProtKB-UniRule"/>
</dbReference>
<dbReference type="GO" id="GO:0006226">
    <property type="term" value="P:dUMP biosynthetic process"/>
    <property type="evidence" value="ECO:0007669"/>
    <property type="project" value="UniProtKB-UniRule"/>
</dbReference>
<dbReference type="GO" id="GO:0046081">
    <property type="term" value="P:dUTP catabolic process"/>
    <property type="evidence" value="ECO:0007669"/>
    <property type="project" value="InterPro"/>
</dbReference>
<dbReference type="CDD" id="cd07557">
    <property type="entry name" value="trimeric_dUTPase"/>
    <property type="match status" value="1"/>
</dbReference>
<dbReference type="FunFam" id="2.70.40.10:FF:000008">
    <property type="entry name" value="Deoxyuridine 5'-triphosphate nucleotidohydrolase"/>
    <property type="match status" value="1"/>
</dbReference>
<dbReference type="Gene3D" id="2.70.40.10">
    <property type="match status" value="1"/>
</dbReference>
<dbReference type="HAMAP" id="MF_00116">
    <property type="entry name" value="dUTPase_bact"/>
    <property type="match status" value="1"/>
</dbReference>
<dbReference type="InterPro" id="IPR008181">
    <property type="entry name" value="dUTPase"/>
</dbReference>
<dbReference type="InterPro" id="IPR029054">
    <property type="entry name" value="dUTPase-like"/>
</dbReference>
<dbReference type="InterPro" id="IPR036157">
    <property type="entry name" value="dUTPase-like_sf"/>
</dbReference>
<dbReference type="InterPro" id="IPR033704">
    <property type="entry name" value="dUTPase_trimeric"/>
</dbReference>
<dbReference type="NCBIfam" id="TIGR00576">
    <property type="entry name" value="dut"/>
    <property type="match status" value="1"/>
</dbReference>
<dbReference type="NCBIfam" id="NF001862">
    <property type="entry name" value="PRK00601.1"/>
    <property type="match status" value="1"/>
</dbReference>
<dbReference type="PANTHER" id="PTHR11241">
    <property type="entry name" value="DEOXYURIDINE 5'-TRIPHOSPHATE NUCLEOTIDOHYDROLASE"/>
    <property type="match status" value="1"/>
</dbReference>
<dbReference type="PANTHER" id="PTHR11241:SF0">
    <property type="entry name" value="DEOXYURIDINE 5'-TRIPHOSPHATE NUCLEOTIDOHYDROLASE"/>
    <property type="match status" value="1"/>
</dbReference>
<dbReference type="Pfam" id="PF00692">
    <property type="entry name" value="dUTPase"/>
    <property type="match status" value="1"/>
</dbReference>
<dbReference type="SUPFAM" id="SSF51283">
    <property type="entry name" value="dUTPase-like"/>
    <property type="match status" value="1"/>
</dbReference>
<feature type="chain" id="PRO_1000119226" description="Deoxyuridine 5'-triphosphate nucleotidohydrolase">
    <location>
        <begin position="1"/>
        <end position="158"/>
    </location>
</feature>
<feature type="binding site" evidence="1">
    <location>
        <begin position="75"/>
        <end position="77"/>
    </location>
    <ligand>
        <name>substrate</name>
    </ligand>
</feature>
<feature type="binding site" evidence="1">
    <location>
        <position position="88"/>
    </location>
    <ligand>
        <name>substrate</name>
    </ligand>
</feature>
<feature type="binding site" evidence="1">
    <location>
        <begin position="92"/>
        <end position="94"/>
    </location>
    <ligand>
        <name>substrate</name>
    </ligand>
</feature>
<feature type="binding site" evidence="1">
    <location>
        <position position="102"/>
    </location>
    <ligand>
        <name>substrate</name>
    </ligand>
</feature>
<comment type="function">
    <text evidence="1">This enzyme is involved in nucleotide metabolism: it produces dUMP, the immediate precursor of thymidine nucleotides and it decreases the intracellular concentration of dUTP so that uracil cannot be incorporated into DNA.</text>
</comment>
<comment type="catalytic activity">
    <reaction evidence="1">
        <text>dUTP + H2O = dUMP + diphosphate + H(+)</text>
        <dbReference type="Rhea" id="RHEA:10248"/>
        <dbReference type="ChEBI" id="CHEBI:15377"/>
        <dbReference type="ChEBI" id="CHEBI:15378"/>
        <dbReference type="ChEBI" id="CHEBI:33019"/>
        <dbReference type="ChEBI" id="CHEBI:61555"/>
        <dbReference type="ChEBI" id="CHEBI:246422"/>
        <dbReference type="EC" id="3.6.1.23"/>
    </reaction>
</comment>
<comment type="cofactor">
    <cofactor evidence="1">
        <name>Mg(2+)</name>
        <dbReference type="ChEBI" id="CHEBI:18420"/>
    </cofactor>
</comment>
<comment type="pathway">
    <text evidence="1">Pyrimidine metabolism; dUMP biosynthesis; dUMP from dCTP (dUTP route): step 2/2.</text>
</comment>
<comment type="similarity">
    <text evidence="1">Belongs to the dUTPase family.</text>
</comment>
<proteinExistence type="inferred from homology"/>
<keyword id="KW-0378">Hydrolase</keyword>
<keyword id="KW-0460">Magnesium</keyword>
<keyword id="KW-0479">Metal-binding</keyword>
<keyword id="KW-0546">Nucleotide metabolism</keyword>
<accession>B7GQI9</accession>
<accession>E8MRF2</accession>
<sequence>MAFDETYNEPESTEVLVKSLDPEHPALLRYAHAGDAGADLITTVDVTLKPFERALVPTGVAIALPAGYVALVHPRSGLAAKQGVTVLNAPGTVDAGYRGEIKVPLINLDPKHTAVFHPGDRIAQLVIQRYVEARFIPAETLPGSDRAERGFGSTGVAS</sequence>
<evidence type="ECO:0000255" key="1">
    <source>
        <dbReference type="HAMAP-Rule" id="MF_00116"/>
    </source>
</evidence>